<evidence type="ECO:0000255" key="1">
    <source>
        <dbReference type="HAMAP-Rule" id="MF_00539"/>
    </source>
</evidence>
<evidence type="ECO:0000256" key="2">
    <source>
        <dbReference type="SAM" id="MobiDB-lite"/>
    </source>
</evidence>
<evidence type="ECO:0000305" key="3"/>
<comment type="similarity">
    <text evidence="1">Belongs to the bacterial ribosomal protein bL27 family.</text>
</comment>
<reference key="1">
    <citation type="submission" date="2006-08" db="EMBL/GenBank/DDBJ databases">
        <title>Complete sequence of Shewanella sp. MR-4.</title>
        <authorList>
            <consortium name="US DOE Joint Genome Institute"/>
            <person name="Copeland A."/>
            <person name="Lucas S."/>
            <person name="Lapidus A."/>
            <person name="Barry K."/>
            <person name="Detter J.C."/>
            <person name="Glavina del Rio T."/>
            <person name="Hammon N."/>
            <person name="Israni S."/>
            <person name="Dalin E."/>
            <person name="Tice H."/>
            <person name="Pitluck S."/>
            <person name="Kiss H."/>
            <person name="Brettin T."/>
            <person name="Bruce D."/>
            <person name="Han C."/>
            <person name="Tapia R."/>
            <person name="Gilna P."/>
            <person name="Schmutz J."/>
            <person name="Larimer F."/>
            <person name="Land M."/>
            <person name="Hauser L."/>
            <person name="Kyrpides N."/>
            <person name="Mikhailova N."/>
            <person name="Nealson K."/>
            <person name="Konstantinidis K."/>
            <person name="Klappenbach J."/>
            <person name="Tiedje J."/>
            <person name="Richardson P."/>
        </authorList>
    </citation>
    <scope>NUCLEOTIDE SEQUENCE [LARGE SCALE GENOMIC DNA]</scope>
    <source>
        <strain>MR-4</strain>
    </source>
</reference>
<organism>
    <name type="scientific">Shewanella sp. (strain MR-4)</name>
    <dbReference type="NCBI Taxonomy" id="60480"/>
    <lineage>
        <taxon>Bacteria</taxon>
        <taxon>Pseudomonadati</taxon>
        <taxon>Pseudomonadota</taxon>
        <taxon>Gammaproteobacteria</taxon>
        <taxon>Alteromonadales</taxon>
        <taxon>Shewanellaceae</taxon>
        <taxon>Shewanella</taxon>
    </lineage>
</organism>
<name>RL27_SHESM</name>
<proteinExistence type="inferred from homology"/>
<dbReference type="EMBL" id="CP000446">
    <property type="protein sequence ID" value="ABI37976.1"/>
    <property type="molecule type" value="Genomic_DNA"/>
</dbReference>
<dbReference type="RefSeq" id="WP_011621691.1">
    <property type="nucleotide sequence ID" value="NC_008321.1"/>
</dbReference>
<dbReference type="SMR" id="Q0HLU1"/>
<dbReference type="KEGG" id="she:Shewmr4_0896"/>
<dbReference type="HOGENOM" id="CLU_095424_4_1_6"/>
<dbReference type="GO" id="GO:0022625">
    <property type="term" value="C:cytosolic large ribosomal subunit"/>
    <property type="evidence" value="ECO:0007669"/>
    <property type="project" value="TreeGrafter"/>
</dbReference>
<dbReference type="GO" id="GO:0003735">
    <property type="term" value="F:structural constituent of ribosome"/>
    <property type="evidence" value="ECO:0007669"/>
    <property type="project" value="InterPro"/>
</dbReference>
<dbReference type="GO" id="GO:0006412">
    <property type="term" value="P:translation"/>
    <property type="evidence" value="ECO:0007669"/>
    <property type="project" value="UniProtKB-UniRule"/>
</dbReference>
<dbReference type="FunFam" id="2.40.50.100:FF:000001">
    <property type="entry name" value="50S ribosomal protein L27"/>
    <property type="match status" value="1"/>
</dbReference>
<dbReference type="Gene3D" id="2.40.50.100">
    <property type="match status" value="1"/>
</dbReference>
<dbReference type="HAMAP" id="MF_00539">
    <property type="entry name" value="Ribosomal_bL27"/>
    <property type="match status" value="1"/>
</dbReference>
<dbReference type="InterPro" id="IPR001684">
    <property type="entry name" value="Ribosomal_bL27"/>
</dbReference>
<dbReference type="InterPro" id="IPR018261">
    <property type="entry name" value="Ribosomal_bL27_CS"/>
</dbReference>
<dbReference type="NCBIfam" id="TIGR00062">
    <property type="entry name" value="L27"/>
    <property type="match status" value="1"/>
</dbReference>
<dbReference type="PANTHER" id="PTHR15893:SF0">
    <property type="entry name" value="LARGE RIBOSOMAL SUBUNIT PROTEIN BL27M"/>
    <property type="match status" value="1"/>
</dbReference>
<dbReference type="PANTHER" id="PTHR15893">
    <property type="entry name" value="RIBOSOMAL PROTEIN L27"/>
    <property type="match status" value="1"/>
</dbReference>
<dbReference type="Pfam" id="PF01016">
    <property type="entry name" value="Ribosomal_L27"/>
    <property type="match status" value="1"/>
</dbReference>
<dbReference type="PRINTS" id="PR00063">
    <property type="entry name" value="RIBOSOMALL27"/>
</dbReference>
<dbReference type="SUPFAM" id="SSF110324">
    <property type="entry name" value="Ribosomal L27 protein-like"/>
    <property type="match status" value="1"/>
</dbReference>
<dbReference type="PROSITE" id="PS00831">
    <property type="entry name" value="RIBOSOMAL_L27"/>
    <property type="match status" value="1"/>
</dbReference>
<keyword id="KW-0687">Ribonucleoprotein</keyword>
<keyword id="KW-0689">Ribosomal protein</keyword>
<sequence length="84" mass="9063">MAHKKAGGSTRNGRDSESKRLGVKRFGGESVLAGNIIVRQRGTKFHAGVNVGVGRDHTLFALTDGKVKFEVKGPNNRKFISIEA</sequence>
<feature type="chain" id="PRO_1000017604" description="Large ribosomal subunit protein bL27">
    <location>
        <begin position="1"/>
        <end position="84"/>
    </location>
</feature>
<feature type="region of interest" description="Disordered" evidence="2">
    <location>
        <begin position="1"/>
        <end position="22"/>
    </location>
</feature>
<protein>
    <recommendedName>
        <fullName evidence="1">Large ribosomal subunit protein bL27</fullName>
    </recommendedName>
    <alternativeName>
        <fullName evidence="3">50S ribosomal protein L27</fullName>
    </alternativeName>
</protein>
<accession>Q0HLU1</accession>
<gene>
    <name evidence="1" type="primary">rpmA</name>
    <name type="ordered locus">Shewmr4_0896</name>
</gene>